<dbReference type="EMBL" id="AP009371">
    <property type="protein sequence ID" value="BAF50217.1"/>
    <property type="molecule type" value="Genomic_DNA"/>
</dbReference>
<dbReference type="RefSeq" id="YP_001123393.1">
    <property type="nucleotide sequence ID" value="NC_009270.1"/>
</dbReference>
<dbReference type="SMR" id="A4QKL2"/>
<dbReference type="GeneID" id="4961622"/>
<dbReference type="GO" id="GO:0009535">
    <property type="term" value="C:chloroplast thylakoid membrane"/>
    <property type="evidence" value="ECO:0007669"/>
    <property type="project" value="UniProtKB-SubCell"/>
</dbReference>
<dbReference type="GO" id="GO:0009522">
    <property type="term" value="C:photosystem I"/>
    <property type="evidence" value="ECO:0007669"/>
    <property type="project" value="UniProtKB-KW"/>
</dbReference>
<dbReference type="GO" id="GO:0015979">
    <property type="term" value="P:photosynthesis"/>
    <property type="evidence" value="ECO:0007669"/>
    <property type="project" value="UniProtKB-UniRule"/>
</dbReference>
<dbReference type="FunFam" id="1.20.5.510:FF:000001">
    <property type="entry name" value="Photosystem I reaction center subunit IX"/>
    <property type="match status" value="1"/>
</dbReference>
<dbReference type="Gene3D" id="1.20.5.510">
    <property type="entry name" value="Single helix bin"/>
    <property type="match status" value="1"/>
</dbReference>
<dbReference type="HAMAP" id="MF_00522">
    <property type="entry name" value="PSI_PsaJ"/>
    <property type="match status" value="1"/>
</dbReference>
<dbReference type="InterPro" id="IPR002615">
    <property type="entry name" value="PSI_PsaJ"/>
</dbReference>
<dbReference type="InterPro" id="IPR036062">
    <property type="entry name" value="PSI_PsaJ_sf"/>
</dbReference>
<dbReference type="PANTHER" id="PTHR36082">
    <property type="match status" value="1"/>
</dbReference>
<dbReference type="PANTHER" id="PTHR36082:SF2">
    <property type="entry name" value="PHOTOSYSTEM I REACTION CENTER SUBUNIT IX"/>
    <property type="match status" value="1"/>
</dbReference>
<dbReference type="Pfam" id="PF01701">
    <property type="entry name" value="PSI_PsaJ"/>
    <property type="match status" value="1"/>
</dbReference>
<dbReference type="SUPFAM" id="SSF81544">
    <property type="entry name" value="Subunit IX of photosystem I reaction centre, PsaJ"/>
    <property type="match status" value="1"/>
</dbReference>
<comment type="function">
    <text evidence="1">May help in the organization of the PsaE and PsaF subunits.</text>
</comment>
<comment type="subcellular location">
    <subcellularLocation>
        <location evidence="1">Plastid</location>
        <location evidence="1">Chloroplast thylakoid membrane</location>
        <topology evidence="1">Single-pass membrane protein</topology>
    </subcellularLocation>
</comment>
<comment type="similarity">
    <text evidence="1">Belongs to the PsaJ family.</text>
</comment>
<accession>A4QKL2</accession>
<proteinExistence type="inferred from homology"/>
<sequence>MRDLKTYLSVAPVLSTLWFVSLAGLLIEINRLFPDALTFPFF</sequence>
<geneLocation type="chloroplast"/>
<feature type="chain" id="PRO_0000354132" description="Photosystem I reaction center subunit IX">
    <location>
        <begin position="1"/>
        <end position="42"/>
    </location>
</feature>
<feature type="transmembrane region" description="Helical" evidence="1">
    <location>
        <begin position="7"/>
        <end position="27"/>
    </location>
</feature>
<keyword id="KW-0150">Chloroplast</keyword>
<keyword id="KW-0472">Membrane</keyword>
<keyword id="KW-0602">Photosynthesis</keyword>
<keyword id="KW-0603">Photosystem I</keyword>
<keyword id="KW-0934">Plastid</keyword>
<keyword id="KW-0793">Thylakoid</keyword>
<keyword id="KW-0812">Transmembrane</keyword>
<keyword id="KW-1133">Transmembrane helix</keyword>
<name>PSAJ_CAPBU</name>
<reference key="1">
    <citation type="submission" date="2007-03" db="EMBL/GenBank/DDBJ databases">
        <title>Sequencing analysis of Capsella bursa-pastoris JO22 chloroplast DNA.</title>
        <authorList>
            <person name="Hosouchi T."/>
            <person name="Tsuruoka H."/>
            <person name="Kotani H."/>
        </authorList>
    </citation>
    <scope>NUCLEOTIDE SEQUENCE [LARGE SCALE GENOMIC DNA]</scope>
</reference>
<protein>
    <recommendedName>
        <fullName evidence="1">Photosystem I reaction center subunit IX</fullName>
    </recommendedName>
    <alternativeName>
        <fullName evidence="1">PSI-J</fullName>
    </alternativeName>
</protein>
<organism>
    <name type="scientific">Capsella bursa-pastoris</name>
    <name type="common">Shepherd's purse</name>
    <name type="synonym">Thlaspi bursa-pastoris</name>
    <dbReference type="NCBI Taxonomy" id="3719"/>
    <lineage>
        <taxon>Eukaryota</taxon>
        <taxon>Viridiplantae</taxon>
        <taxon>Streptophyta</taxon>
        <taxon>Embryophyta</taxon>
        <taxon>Tracheophyta</taxon>
        <taxon>Spermatophyta</taxon>
        <taxon>Magnoliopsida</taxon>
        <taxon>eudicotyledons</taxon>
        <taxon>Gunneridae</taxon>
        <taxon>Pentapetalae</taxon>
        <taxon>rosids</taxon>
        <taxon>malvids</taxon>
        <taxon>Brassicales</taxon>
        <taxon>Brassicaceae</taxon>
        <taxon>Camelineae</taxon>
        <taxon>Capsella</taxon>
    </lineage>
</organism>
<evidence type="ECO:0000255" key="1">
    <source>
        <dbReference type="HAMAP-Rule" id="MF_00522"/>
    </source>
</evidence>
<gene>
    <name evidence="1" type="primary">psaJ</name>
</gene>